<feature type="chain" id="PRO_0000124518" description="Small ribosomal subunit protein uS7m">
    <location>
        <begin position="1"/>
        <end position="148"/>
    </location>
</feature>
<feature type="sequence conflict" description="In Ref. 2; DAB41501." evidence="3" ref="2">
    <original>S</original>
    <variation>L</variation>
    <location>
        <position position="111"/>
    </location>
</feature>
<proteinExistence type="evidence at protein level"/>
<evidence type="ECO:0000250" key="1"/>
<evidence type="ECO:0000303" key="2">
    <source>
    </source>
</evidence>
<evidence type="ECO:0000305" key="3"/>
<evidence type="ECO:0000312" key="4">
    <source>
        <dbReference type="Araport" id="AT2G07696"/>
    </source>
</evidence>
<evidence type="ECO:0000312" key="5">
    <source>
        <dbReference type="Araport" id="ATMG01270"/>
    </source>
</evidence>
<protein>
    <recommendedName>
        <fullName evidence="2">Small ribosomal subunit protein uS7m</fullName>
    </recommendedName>
    <alternativeName>
        <fullName>Ribosomal protein S7, mitochondrial</fullName>
    </alternativeName>
</protein>
<keyword id="KW-0002">3D-structure</keyword>
<keyword id="KW-0496">Mitochondrion</keyword>
<keyword id="KW-1185">Reference proteome</keyword>
<keyword id="KW-0687">Ribonucleoprotein</keyword>
<keyword id="KW-0689">Ribosomal protein</keyword>
<keyword id="KW-0694">RNA-binding</keyword>
<keyword id="KW-0699">rRNA-binding</keyword>
<accession>P92557</accession>
<accession>A0A2P2CLF5</accession>
<organism>
    <name type="scientific">Arabidopsis thaliana</name>
    <name type="common">Mouse-ear cress</name>
    <dbReference type="NCBI Taxonomy" id="3702"/>
    <lineage>
        <taxon>Eukaryota</taxon>
        <taxon>Viridiplantae</taxon>
        <taxon>Streptophyta</taxon>
        <taxon>Embryophyta</taxon>
        <taxon>Tracheophyta</taxon>
        <taxon>Spermatophyta</taxon>
        <taxon>Magnoliopsida</taxon>
        <taxon>eudicotyledons</taxon>
        <taxon>Gunneridae</taxon>
        <taxon>Pentapetalae</taxon>
        <taxon>rosids</taxon>
        <taxon>malvids</taxon>
        <taxon>Brassicales</taxon>
        <taxon>Brassicaceae</taxon>
        <taxon>Camelineae</taxon>
        <taxon>Arabidopsis</taxon>
    </lineage>
</organism>
<geneLocation type="mitochondrion"/>
<sequence length="148" mass="17201">MGGLDGEQKLLIKKLVNFRMKEGKRTRVRAIVYQTFHRPARTERDVIKLMVDAVENIKPICEVAKVGVAGTIYDVPGIVARDRQQTLAIRWILEAAFKRRISYRISLEKCSFAEILDAYQKRGSARRKRENLHGLASTNRSFAHFRWW</sequence>
<reference key="1">
    <citation type="journal article" date="1997" name="Nat. Genet.">
        <title>The mitochondrial genome of Arabidopsis thaliana contains 57 genes in 366,924 nucleotides.</title>
        <authorList>
            <person name="Unseld M."/>
            <person name="Marienfeld J.R."/>
            <person name="Brandt P."/>
            <person name="Brennicke A."/>
        </authorList>
    </citation>
    <scope>NUCLEOTIDE SEQUENCE [LARGE SCALE GENOMIC DNA]</scope>
    <source>
        <strain>cv. C24</strain>
    </source>
</reference>
<reference key="2">
    <citation type="journal article" date="2018" name="Plant Cell">
        <title>Correction of persistent errors in Arabidopsis reference mitochondrial genomes.</title>
        <authorList>
            <person name="Sloan D.B."/>
            <person name="Wu Z."/>
            <person name="Sharbrough J."/>
        </authorList>
    </citation>
    <scope>NUCLEOTIDE SEQUENCE [LARGE SCALE GENOMIC DNA]</scope>
    <source>
        <strain>cv. Columbia</strain>
    </source>
</reference>
<reference key="3">
    <citation type="journal article" date="1999" name="Nature">
        <title>Sequence and analysis of chromosome 2 of the plant Arabidopsis thaliana.</title>
        <authorList>
            <person name="Lin X."/>
            <person name="Kaul S."/>
            <person name="Rounsley S.D."/>
            <person name="Shea T.P."/>
            <person name="Benito M.-I."/>
            <person name="Town C.D."/>
            <person name="Fujii C.Y."/>
            <person name="Mason T.M."/>
            <person name="Bowman C.L."/>
            <person name="Barnstead M.E."/>
            <person name="Feldblyum T.V."/>
            <person name="Buell C.R."/>
            <person name="Ketchum K.A."/>
            <person name="Lee J.J."/>
            <person name="Ronning C.M."/>
            <person name="Koo H.L."/>
            <person name="Moffat K.S."/>
            <person name="Cronin L.A."/>
            <person name="Shen M."/>
            <person name="Pai G."/>
            <person name="Van Aken S."/>
            <person name="Umayam L."/>
            <person name="Tallon L.J."/>
            <person name="Gill J.E."/>
            <person name="Adams M.D."/>
            <person name="Carrera A.J."/>
            <person name="Creasy T.H."/>
            <person name="Goodman H.M."/>
            <person name="Somerville C.R."/>
            <person name="Copenhaver G.P."/>
            <person name="Preuss D."/>
            <person name="Nierman W.C."/>
            <person name="White O."/>
            <person name="Eisen J.A."/>
            <person name="Salzberg S.L."/>
            <person name="Fraser C.M."/>
            <person name="Venter J.C."/>
        </authorList>
    </citation>
    <scope>NUCLEOTIDE SEQUENCE [LARGE SCALE GENOMIC DNA] (AT2G07696)</scope>
    <source>
        <strain>cv. Columbia</strain>
    </source>
</reference>
<reference key="4">
    <citation type="journal article" date="2017" name="Plant J.">
        <title>Araport11: a complete reannotation of the Arabidopsis thaliana reference genome.</title>
        <authorList>
            <person name="Cheng C.Y."/>
            <person name="Krishnakumar V."/>
            <person name="Chan A.P."/>
            <person name="Thibaud-Nissen F."/>
            <person name="Schobel S."/>
            <person name="Town C.D."/>
        </authorList>
    </citation>
    <scope>GENOME REANNOTATION (AT2G07696)</scope>
    <source>
        <strain>cv. Columbia</strain>
    </source>
</reference>
<reference key="5">
    <citation type="submission" date="2004-01" db="EMBL/GenBank/DDBJ databases">
        <title>Arabidopsis ORF clones.</title>
        <authorList>
            <person name="Cheuk R.F."/>
            <person name="Chen H."/>
            <person name="Kim C.J."/>
            <person name="Shinn P."/>
            <person name="Ecker J.R."/>
        </authorList>
    </citation>
    <scope>NUCLEOTIDE SEQUENCE [LARGE SCALE MRNA] (AT2G07696)</scope>
    <source>
        <strain>cv. Columbia</strain>
    </source>
</reference>
<reference key="6">
    <citation type="journal article" date="2023" name="Plant Cell">
        <title>An updated nomenclature for plant ribosomal protein genes.</title>
        <authorList>
            <person name="Scarpin M.R."/>
            <person name="Busche M."/>
            <person name="Martinez R.E."/>
            <person name="Harper L.C."/>
            <person name="Reiser L."/>
            <person name="Szakonyi D."/>
            <person name="Merchante C."/>
            <person name="Lan T."/>
            <person name="Xiong W."/>
            <person name="Mo B."/>
            <person name="Tang G."/>
            <person name="Chen X."/>
            <person name="Bailey-Serres J."/>
            <person name="Browning K.S."/>
            <person name="Brunkard J.O."/>
        </authorList>
    </citation>
    <scope>NOMENCLATURE</scope>
</reference>
<comment type="function">
    <text evidence="1">One of the primary rRNA binding proteins, it binds directly to 18S rRNA where it nucleates assembly of the head domain of the small subunit.</text>
</comment>
<comment type="subunit">
    <text evidence="3">Part of the small ribosomal subunit.</text>
</comment>
<comment type="subcellular location">
    <subcellularLocation>
        <location evidence="2">Mitochondrion</location>
    </subcellularLocation>
</comment>
<comment type="miscellaneous">
    <text>A stretch of 270 kb of the mitochondrial genome is duplicated within the centromere of chromosome 2 resulting in the duplication of the gene. The expression of this duplicated gene (At2g07696) is demonstrated.</text>
</comment>
<comment type="similarity">
    <text evidence="3">Belongs to the universal ribosomal protein uS7 family.</text>
</comment>
<name>RT07_ARATH</name>
<gene>
    <name type="primary">RPS7</name>
    <name evidence="5" type="ordered locus">AtMg01270</name>
</gene>
<gene>
    <name evidence="4" type="ordered locus">At2g07696</name>
</gene>
<dbReference type="EMBL" id="Y08501">
    <property type="protein sequence ID" value="CAA69810.1"/>
    <property type="molecule type" value="Genomic_DNA"/>
</dbReference>
<dbReference type="EMBL" id="BK010421">
    <property type="protein sequence ID" value="DAB41501.2"/>
    <property type="molecule type" value="Genomic_DNA"/>
</dbReference>
<dbReference type="EMBL" id="AC007729">
    <property type="protein sequence ID" value="AAM15488.1"/>
    <property type="molecule type" value="Genomic_DNA"/>
</dbReference>
<dbReference type="EMBL" id="CP002685">
    <property type="protein sequence ID" value="AEC06086.1"/>
    <property type="molecule type" value="Genomic_DNA"/>
</dbReference>
<dbReference type="EMBL" id="BT011309">
    <property type="protein sequence ID" value="AAR92345.1"/>
    <property type="molecule type" value="mRNA"/>
</dbReference>
<dbReference type="RefSeq" id="NP_085579.1">
    <property type="nucleotide sequence ID" value="NC_001284.2"/>
</dbReference>
<dbReference type="RefSeq" id="NP_178787.1">
    <property type="nucleotide sequence ID" value="NM_126746.3"/>
</dbReference>
<dbReference type="PDB" id="6XYW">
    <property type="method" value="EM"/>
    <property type="resolution" value="3.86 A"/>
    <property type="chains" value="Bf=1-148"/>
</dbReference>
<dbReference type="PDBsum" id="6XYW"/>
<dbReference type="EMDB" id="EMD-10654"/>
<dbReference type="SMR" id="P92557"/>
<dbReference type="FunCoup" id="P92557">
    <property type="interactions" value="64"/>
</dbReference>
<dbReference type="IntAct" id="P92557">
    <property type="interactions" value="1"/>
</dbReference>
<dbReference type="STRING" id="3702.A0A2P2CLF5"/>
<dbReference type="PaxDb" id="3702-AT2G07696.1"/>
<dbReference type="ProteomicsDB" id="228035"/>
<dbReference type="EnsemblPlants" id="AT2G07696.1">
    <property type="protein sequence ID" value="AT2G07696.1"/>
    <property type="gene ID" value="AT2G07696"/>
</dbReference>
<dbReference type="EnsemblPlants" id="ATMG01270.1">
    <property type="protein sequence ID" value="ATMG01270.1"/>
    <property type="gene ID" value="ATMG01270"/>
</dbReference>
<dbReference type="GeneID" id="815372"/>
<dbReference type="Gramene" id="AT2G07696.1">
    <property type="protein sequence ID" value="AT2G07696.1"/>
    <property type="gene ID" value="AT2G07696"/>
</dbReference>
<dbReference type="Gramene" id="ATMG01270.1">
    <property type="protein sequence ID" value="ATMG01270.1"/>
    <property type="gene ID" value="ATMG01270"/>
</dbReference>
<dbReference type="KEGG" id="ath:AT2G07696"/>
<dbReference type="Araport" id="AT2G07696"/>
<dbReference type="Araport" id="ATMG01270"/>
<dbReference type="TAIR" id="AT2G07696"/>
<dbReference type="TAIR" id="ATMG01270">
    <property type="gene designation" value="RPS7"/>
</dbReference>
<dbReference type="eggNOG" id="KOG3291">
    <property type="taxonomic scope" value="Eukaryota"/>
</dbReference>
<dbReference type="HOGENOM" id="CLU_072226_1_1_1"/>
<dbReference type="InParanoid" id="P92557"/>
<dbReference type="OMA" id="RPERNVI"/>
<dbReference type="PhylomeDB" id="P92557"/>
<dbReference type="PRO" id="PR:P92557"/>
<dbReference type="Proteomes" id="UP000006548">
    <property type="component" value="Chromosome 2"/>
</dbReference>
<dbReference type="Proteomes" id="UP000006548">
    <property type="component" value="Mitochondrion MT"/>
</dbReference>
<dbReference type="ExpressionAtlas" id="P92557">
    <property type="expression patterns" value="baseline and differential"/>
</dbReference>
<dbReference type="GO" id="GO:0005763">
    <property type="term" value="C:mitochondrial small ribosomal subunit"/>
    <property type="evidence" value="ECO:0007669"/>
    <property type="project" value="InterPro"/>
</dbReference>
<dbReference type="GO" id="GO:0003729">
    <property type="term" value="F:mRNA binding"/>
    <property type="evidence" value="ECO:0000314"/>
    <property type="project" value="TAIR"/>
</dbReference>
<dbReference type="GO" id="GO:0019843">
    <property type="term" value="F:rRNA binding"/>
    <property type="evidence" value="ECO:0007669"/>
    <property type="project" value="UniProtKB-KW"/>
</dbReference>
<dbReference type="GO" id="GO:0003735">
    <property type="term" value="F:structural constituent of ribosome"/>
    <property type="evidence" value="ECO:0007669"/>
    <property type="project" value="InterPro"/>
</dbReference>
<dbReference type="GO" id="GO:0006412">
    <property type="term" value="P:translation"/>
    <property type="evidence" value="ECO:0007669"/>
    <property type="project" value="InterPro"/>
</dbReference>
<dbReference type="CDD" id="cd15484">
    <property type="entry name" value="uS7_plant"/>
    <property type="match status" value="1"/>
</dbReference>
<dbReference type="FunFam" id="1.10.455.10:FF:000005">
    <property type="entry name" value="Ribosomal protein S7"/>
    <property type="match status" value="1"/>
</dbReference>
<dbReference type="Gene3D" id="1.10.455.10">
    <property type="entry name" value="Ribosomal protein S7 domain"/>
    <property type="match status" value="1"/>
</dbReference>
<dbReference type="InterPro" id="IPR000235">
    <property type="entry name" value="Ribosomal_uS7"/>
</dbReference>
<dbReference type="InterPro" id="IPR005717">
    <property type="entry name" value="Ribosomal_uS7_bac/org-type"/>
</dbReference>
<dbReference type="InterPro" id="IPR023798">
    <property type="entry name" value="Ribosomal_uS7_dom"/>
</dbReference>
<dbReference type="InterPro" id="IPR036823">
    <property type="entry name" value="Ribosomal_uS7_dom_sf"/>
</dbReference>
<dbReference type="InterPro" id="IPR034643">
    <property type="entry name" value="RPS7_plant"/>
</dbReference>
<dbReference type="NCBIfam" id="TIGR01029">
    <property type="entry name" value="rpsG_bact"/>
    <property type="match status" value="1"/>
</dbReference>
<dbReference type="PANTHER" id="PTHR11205">
    <property type="entry name" value="RIBOSOMAL PROTEIN S7"/>
    <property type="match status" value="1"/>
</dbReference>
<dbReference type="Pfam" id="PF00177">
    <property type="entry name" value="Ribosomal_S7"/>
    <property type="match status" value="1"/>
</dbReference>
<dbReference type="PIRSF" id="PIRSF002122">
    <property type="entry name" value="RPS7p_RPS7a_RPS5e_RPS7o"/>
    <property type="match status" value="1"/>
</dbReference>
<dbReference type="SUPFAM" id="SSF47973">
    <property type="entry name" value="Ribosomal protein S7"/>
    <property type="match status" value="1"/>
</dbReference>
<dbReference type="PROSITE" id="PS00052">
    <property type="entry name" value="RIBOSOMAL_S7"/>
    <property type="match status" value="1"/>
</dbReference>